<proteinExistence type="inferred from homology"/>
<accession>P75216</accession>
<sequence>MTKNLLNYLNELEAWLTNYVNEAHAQGVVVGLSGGVDSAVVAAMTKKLFPQNHLTLVMHINNSELDHKATTALVEQLQLNNKQVDLEPPYRAMLQALTIDPQKELMVAGNLKARLRMACLYTHAQKHNYLVLGTGNFIEYSLGYFTKWGDGACDVAPLAFLLKSDVYALSQHFNVPELVIERAPTASLFAGQTDEAEMGLTYKELDQYFQGHLQLSATKQQRVDHLRQSSQHKRSLPKTFKPLYSFQI</sequence>
<protein>
    <recommendedName>
        <fullName evidence="1">NH(3)-dependent NAD(+) synthetase</fullName>
        <ecNumber evidence="1">6.3.1.5</ecNumber>
    </recommendedName>
</protein>
<keyword id="KW-0067">ATP-binding</keyword>
<keyword id="KW-0436">Ligase</keyword>
<keyword id="KW-0460">Magnesium</keyword>
<keyword id="KW-0479">Metal-binding</keyword>
<keyword id="KW-0520">NAD</keyword>
<keyword id="KW-0547">Nucleotide-binding</keyword>
<keyword id="KW-1185">Reference proteome</keyword>
<dbReference type="EC" id="6.3.1.5" evidence="1"/>
<dbReference type="EMBL" id="U00089">
    <property type="protein sequence ID" value="AAB95928.1"/>
    <property type="molecule type" value="Genomic_DNA"/>
</dbReference>
<dbReference type="PIR" id="S73606">
    <property type="entry name" value="S73606"/>
</dbReference>
<dbReference type="RefSeq" id="NP_110251.1">
    <property type="nucleotide sequence ID" value="NC_000912.1"/>
</dbReference>
<dbReference type="RefSeq" id="WP_010874919.1">
    <property type="nucleotide sequence ID" value="NZ_OU342337.1"/>
</dbReference>
<dbReference type="SMR" id="P75216"/>
<dbReference type="IntAct" id="P75216">
    <property type="interactions" value="2"/>
</dbReference>
<dbReference type="STRING" id="272634.MPN_562"/>
<dbReference type="EnsemblBacteria" id="AAB95928">
    <property type="protein sequence ID" value="AAB95928"/>
    <property type="gene ID" value="MPN_562"/>
</dbReference>
<dbReference type="KEGG" id="mpn:MPN_562"/>
<dbReference type="PATRIC" id="fig|272634.6.peg.624"/>
<dbReference type="HOGENOM" id="CLU_059327_1_1_14"/>
<dbReference type="OrthoDB" id="9803818at2"/>
<dbReference type="BioCyc" id="MPNE272634:G1GJ3-922-MONOMER"/>
<dbReference type="UniPathway" id="UPA00253">
    <property type="reaction ID" value="UER00333"/>
</dbReference>
<dbReference type="Proteomes" id="UP000000808">
    <property type="component" value="Chromosome"/>
</dbReference>
<dbReference type="GO" id="GO:0005737">
    <property type="term" value="C:cytoplasm"/>
    <property type="evidence" value="ECO:0007669"/>
    <property type="project" value="InterPro"/>
</dbReference>
<dbReference type="GO" id="GO:0005524">
    <property type="term" value="F:ATP binding"/>
    <property type="evidence" value="ECO:0007669"/>
    <property type="project" value="UniProtKB-UniRule"/>
</dbReference>
<dbReference type="GO" id="GO:0004359">
    <property type="term" value="F:glutaminase activity"/>
    <property type="evidence" value="ECO:0007669"/>
    <property type="project" value="InterPro"/>
</dbReference>
<dbReference type="GO" id="GO:0046872">
    <property type="term" value="F:metal ion binding"/>
    <property type="evidence" value="ECO:0007669"/>
    <property type="project" value="UniProtKB-KW"/>
</dbReference>
<dbReference type="GO" id="GO:0003952">
    <property type="term" value="F:NAD+ synthase (glutamine-hydrolyzing) activity"/>
    <property type="evidence" value="ECO:0007669"/>
    <property type="project" value="InterPro"/>
</dbReference>
<dbReference type="GO" id="GO:0008795">
    <property type="term" value="F:NAD+ synthase activity"/>
    <property type="evidence" value="ECO:0007669"/>
    <property type="project" value="UniProtKB-UniRule"/>
</dbReference>
<dbReference type="GO" id="GO:0009435">
    <property type="term" value="P:NAD biosynthetic process"/>
    <property type="evidence" value="ECO:0007669"/>
    <property type="project" value="UniProtKB-UniRule"/>
</dbReference>
<dbReference type="CDD" id="cd00553">
    <property type="entry name" value="NAD_synthase"/>
    <property type="match status" value="1"/>
</dbReference>
<dbReference type="Gene3D" id="3.40.50.620">
    <property type="entry name" value="HUPs"/>
    <property type="match status" value="1"/>
</dbReference>
<dbReference type="HAMAP" id="MF_00193">
    <property type="entry name" value="NadE_ammonia_dep"/>
    <property type="match status" value="1"/>
</dbReference>
<dbReference type="InterPro" id="IPR022310">
    <property type="entry name" value="NAD/GMP_synthase"/>
</dbReference>
<dbReference type="InterPro" id="IPR003694">
    <property type="entry name" value="NAD_synthase"/>
</dbReference>
<dbReference type="InterPro" id="IPR022926">
    <property type="entry name" value="NH(3)-dep_NAD(+)_synth"/>
</dbReference>
<dbReference type="InterPro" id="IPR014729">
    <property type="entry name" value="Rossmann-like_a/b/a_fold"/>
</dbReference>
<dbReference type="NCBIfam" id="TIGR00552">
    <property type="entry name" value="nadE"/>
    <property type="match status" value="1"/>
</dbReference>
<dbReference type="PANTHER" id="PTHR23090:SF9">
    <property type="entry name" value="GLUTAMINE-DEPENDENT NAD(+) SYNTHETASE"/>
    <property type="match status" value="1"/>
</dbReference>
<dbReference type="PANTHER" id="PTHR23090">
    <property type="entry name" value="NH 3 /GLUTAMINE-DEPENDENT NAD + SYNTHETASE"/>
    <property type="match status" value="1"/>
</dbReference>
<dbReference type="Pfam" id="PF02540">
    <property type="entry name" value="NAD_synthase"/>
    <property type="match status" value="1"/>
</dbReference>
<dbReference type="SUPFAM" id="SSF52402">
    <property type="entry name" value="Adenine nucleotide alpha hydrolases-like"/>
    <property type="match status" value="1"/>
</dbReference>
<reference key="1">
    <citation type="journal article" date="1996" name="Nucleic Acids Res.">
        <title>Complete sequence analysis of the genome of the bacterium Mycoplasma pneumoniae.</title>
        <authorList>
            <person name="Himmelreich R."/>
            <person name="Hilbert H."/>
            <person name="Plagens H."/>
            <person name="Pirkl E."/>
            <person name="Li B.-C."/>
            <person name="Herrmann R."/>
        </authorList>
    </citation>
    <scope>NUCLEOTIDE SEQUENCE [LARGE SCALE GENOMIC DNA]</scope>
    <source>
        <strain>ATCC 29342 / M129 / Subtype 1</strain>
    </source>
</reference>
<organism>
    <name type="scientific">Mycoplasma pneumoniae (strain ATCC 29342 / M129 / Subtype 1)</name>
    <name type="common">Mycoplasmoides pneumoniae</name>
    <dbReference type="NCBI Taxonomy" id="272634"/>
    <lineage>
        <taxon>Bacteria</taxon>
        <taxon>Bacillati</taxon>
        <taxon>Mycoplasmatota</taxon>
        <taxon>Mycoplasmoidales</taxon>
        <taxon>Mycoplasmoidaceae</taxon>
        <taxon>Mycoplasmoides</taxon>
    </lineage>
</organism>
<evidence type="ECO:0000255" key="1">
    <source>
        <dbReference type="HAMAP-Rule" id="MF_00193"/>
    </source>
</evidence>
<evidence type="ECO:0000305" key="2"/>
<gene>
    <name evidence="1" type="primary">nadE</name>
    <name type="ordered locus">MPN_562</name>
    <name type="ORF">MP280</name>
</gene>
<feature type="chain" id="PRO_0000152182" description="NH(3)-dependent NAD(+) synthetase">
    <location>
        <begin position="1"/>
        <end position="248"/>
    </location>
</feature>
<feature type="binding site" evidence="1">
    <location>
        <begin position="31"/>
        <end position="38"/>
    </location>
    <ligand>
        <name>ATP</name>
        <dbReference type="ChEBI" id="CHEBI:30616"/>
    </ligand>
</feature>
<feature type="binding site" evidence="1">
    <location>
        <position position="37"/>
    </location>
    <ligand>
        <name>Mg(2+)</name>
        <dbReference type="ChEBI" id="CHEBI:18420"/>
    </ligand>
</feature>
<feature type="binding site" evidence="1">
    <location>
        <position position="114"/>
    </location>
    <ligand>
        <name>deamido-NAD(+)</name>
        <dbReference type="ChEBI" id="CHEBI:58437"/>
    </ligand>
</feature>
<feature type="binding site" evidence="1">
    <location>
        <position position="134"/>
    </location>
    <ligand>
        <name>ATP</name>
        <dbReference type="ChEBI" id="CHEBI:30616"/>
    </ligand>
</feature>
<feature type="binding site" evidence="1">
    <location>
        <position position="139"/>
    </location>
    <ligand>
        <name>Mg(2+)</name>
        <dbReference type="ChEBI" id="CHEBI:18420"/>
    </ligand>
</feature>
<feature type="binding site" evidence="1">
    <location>
        <position position="147"/>
    </location>
    <ligand>
        <name>deamido-NAD(+)</name>
        <dbReference type="ChEBI" id="CHEBI:58437"/>
    </ligand>
</feature>
<feature type="binding site" evidence="1">
    <location>
        <position position="154"/>
    </location>
    <ligand>
        <name>deamido-NAD(+)</name>
        <dbReference type="ChEBI" id="CHEBI:58437"/>
    </ligand>
</feature>
<feature type="binding site" evidence="1">
    <location>
        <position position="163"/>
    </location>
    <ligand>
        <name>ATP</name>
        <dbReference type="ChEBI" id="CHEBI:30616"/>
    </ligand>
</feature>
<feature type="binding site" evidence="1">
    <location>
        <position position="185"/>
    </location>
    <ligand>
        <name>ATP</name>
        <dbReference type="ChEBI" id="CHEBI:30616"/>
    </ligand>
</feature>
<feature type="binding site" evidence="1">
    <location>
        <begin position="232"/>
        <end position="233"/>
    </location>
    <ligand>
        <name>deamido-NAD(+)</name>
        <dbReference type="ChEBI" id="CHEBI:58437"/>
    </ligand>
</feature>
<comment type="function">
    <text evidence="1">Catalyzes the ATP-dependent amidation of deamido-NAD to form NAD. Uses ammonia as a nitrogen source.</text>
</comment>
<comment type="catalytic activity">
    <reaction evidence="1">
        <text>deamido-NAD(+) + NH4(+) + ATP = AMP + diphosphate + NAD(+) + H(+)</text>
        <dbReference type="Rhea" id="RHEA:21188"/>
        <dbReference type="ChEBI" id="CHEBI:15378"/>
        <dbReference type="ChEBI" id="CHEBI:28938"/>
        <dbReference type="ChEBI" id="CHEBI:30616"/>
        <dbReference type="ChEBI" id="CHEBI:33019"/>
        <dbReference type="ChEBI" id="CHEBI:57540"/>
        <dbReference type="ChEBI" id="CHEBI:58437"/>
        <dbReference type="ChEBI" id="CHEBI:456215"/>
        <dbReference type="EC" id="6.3.1.5"/>
    </reaction>
</comment>
<comment type="pathway">
    <text evidence="1">Cofactor biosynthesis; NAD(+) biosynthesis; NAD(+) from deamido-NAD(+) (ammonia route): step 1/1.</text>
</comment>
<comment type="subunit">
    <text evidence="1">Homodimer.</text>
</comment>
<comment type="similarity">
    <text evidence="1 2">Belongs to the NAD synthetase family.</text>
</comment>
<name>NADE_MYCPN</name>